<dbReference type="EC" id="2.5.1.75" evidence="1"/>
<dbReference type="EMBL" id="CP000804">
    <property type="protein sequence ID" value="ABU60336.1"/>
    <property type="molecule type" value="Genomic_DNA"/>
</dbReference>
<dbReference type="RefSeq" id="WP_012122757.1">
    <property type="nucleotide sequence ID" value="NC_009767.1"/>
</dbReference>
<dbReference type="SMR" id="A7NRZ0"/>
<dbReference type="STRING" id="383372.Rcas_4310"/>
<dbReference type="KEGG" id="rca:Rcas_4310"/>
<dbReference type="eggNOG" id="COG0324">
    <property type="taxonomic scope" value="Bacteria"/>
</dbReference>
<dbReference type="HOGENOM" id="CLU_032616_0_1_0"/>
<dbReference type="OrthoDB" id="9776390at2"/>
<dbReference type="Proteomes" id="UP000000263">
    <property type="component" value="Chromosome"/>
</dbReference>
<dbReference type="GO" id="GO:0005524">
    <property type="term" value="F:ATP binding"/>
    <property type="evidence" value="ECO:0007669"/>
    <property type="project" value="UniProtKB-UniRule"/>
</dbReference>
<dbReference type="GO" id="GO:0052381">
    <property type="term" value="F:tRNA dimethylallyltransferase activity"/>
    <property type="evidence" value="ECO:0007669"/>
    <property type="project" value="UniProtKB-UniRule"/>
</dbReference>
<dbReference type="GO" id="GO:0006400">
    <property type="term" value="P:tRNA modification"/>
    <property type="evidence" value="ECO:0007669"/>
    <property type="project" value="TreeGrafter"/>
</dbReference>
<dbReference type="FunFam" id="1.10.20.140:FF:000001">
    <property type="entry name" value="tRNA dimethylallyltransferase"/>
    <property type="match status" value="1"/>
</dbReference>
<dbReference type="Gene3D" id="1.10.20.140">
    <property type="match status" value="1"/>
</dbReference>
<dbReference type="Gene3D" id="3.40.50.300">
    <property type="entry name" value="P-loop containing nucleotide triphosphate hydrolases"/>
    <property type="match status" value="1"/>
</dbReference>
<dbReference type="HAMAP" id="MF_00185">
    <property type="entry name" value="IPP_trans"/>
    <property type="match status" value="1"/>
</dbReference>
<dbReference type="InterPro" id="IPR039657">
    <property type="entry name" value="Dimethylallyltransferase"/>
</dbReference>
<dbReference type="InterPro" id="IPR018022">
    <property type="entry name" value="IPT"/>
</dbReference>
<dbReference type="InterPro" id="IPR027417">
    <property type="entry name" value="P-loop_NTPase"/>
</dbReference>
<dbReference type="NCBIfam" id="TIGR00174">
    <property type="entry name" value="miaA"/>
    <property type="match status" value="1"/>
</dbReference>
<dbReference type="PANTHER" id="PTHR11088">
    <property type="entry name" value="TRNA DIMETHYLALLYLTRANSFERASE"/>
    <property type="match status" value="1"/>
</dbReference>
<dbReference type="PANTHER" id="PTHR11088:SF60">
    <property type="entry name" value="TRNA DIMETHYLALLYLTRANSFERASE"/>
    <property type="match status" value="1"/>
</dbReference>
<dbReference type="Pfam" id="PF01715">
    <property type="entry name" value="IPPT"/>
    <property type="match status" value="1"/>
</dbReference>
<dbReference type="SUPFAM" id="SSF52540">
    <property type="entry name" value="P-loop containing nucleoside triphosphate hydrolases"/>
    <property type="match status" value="2"/>
</dbReference>
<feature type="chain" id="PRO_1000077401" description="tRNA dimethylallyltransferase">
    <location>
        <begin position="1"/>
        <end position="306"/>
    </location>
</feature>
<feature type="region of interest" description="Interaction with substrate tRNA" evidence="1">
    <location>
        <begin position="34"/>
        <end position="37"/>
    </location>
</feature>
<feature type="binding site" evidence="1">
    <location>
        <begin position="9"/>
        <end position="16"/>
    </location>
    <ligand>
        <name>ATP</name>
        <dbReference type="ChEBI" id="CHEBI:30616"/>
    </ligand>
</feature>
<feature type="binding site" evidence="1">
    <location>
        <begin position="11"/>
        <end position="16"/>
    </location>
    <ligand>
        <name>substrate</name>
    </ligand>
</feature>
<feature type="site" description="Interaction with substrate tRNA" evidence="1">
    <location>
        <position position="100"/>
    </location>
</feature>
<feature type="site" description="Interaction with substrate tRNA" evidence="1">
    <location>
        <position position="123"/>
    </location>
</feature>
<organism>
    <name type="scientific">Roseiflexus castenholzii (strain DSM 13941 / HLO8)</name>
    <dbReference type="NCBI Taxonomy" id="383372"/>
    <lineage>
        <taxon>Bacteria</taxon>
        <taxon>Bacillati</taxon>
        <taxon>Chloroflexota</taxon>
        <taxon>Chloroflexia</taxon>
        <taxon>Chloroflexales</taxon>
        <taxon>Roseiflexineae</taxon>
        <taxon>Roseiflexaceae</taxon>
        <taxon>Roseiflexus</taxon>
    </lineage>
</organism>
<sequence length="306" mass="33904">MIPLLAIVGPTAVGKTALSLHLARLFDGEIVSADSRQVYRWMDIGTAKPTPAERATVPHHLIDVVDPDEDFSLALYQDMATAAIADIAARGKLPLLVGGTGQYLAAVLQGWQLPRVAPRPDIRAALERQASEQGGEALYARLKEVDPIAAARILPGNVRRIIRALEVYEATGIPISEQRSVQPPPYRITTIWLTLPAPVLYARIDARVEAMMAAGLLDEVRGLLERGYHWNLPSMSGLGYREFRPYFEGRATLEEAVTRLKYDTHTFARRQPAWFRRLPNIVTLPADAPDLLQRAEAIVRQTFDSS</sequence>
<accession>A7NRZ0</accession>
<gene>
    <name evidence="1" type="primary">miaA</name>
    <name type="ordered locus">Rcas_4310</name>
</gene>
<name>MIAA_ROSCS</name>
<comment type="function">
    <text evidence="1">Catalyzes the transfer of a dimethylallyl group onto the adenine at position 37 in tRNAs that read codons beginning with uridine, leading to the formation of N6-(dimethylallyl)adenosine (i(6)A).</text>
</comment>
<comment type="catalytic activity">
    <reaction evidence="1">
        <text>adenosine(37) in tRNA + dimethylallyl diphosphate = N(6)-dimethylallyladenosine(37) in tRNA + diphosphate</text>
        <dbReference type="Rhea" id="RHEA:26482"/>
        <dbReference type="Rhea" id="RHEA-COMP:10162"/>
        <dbReference type="Rhea" id="RHEA-COMP:10375"/>
        <dbReference type="ChEBI" id="CHEBI:33019"/>
        <dbReference type="ChEBI" id="CHEBI:57623"/>
        <dbReference type="ChEBI" id="CHEBI:74411"/>
        <dbReference type="ChEBI" id="CHEBI:74415"/>
        <dbReference type="EC" id="2.5.1.75"/>
    </reaction>
</comment>
<comment type="cofactor">
    <cofactor evidence="1">
        <name>Mg(2+)</name>
        <dbReference type="ChEBI" id="CHEBI:18420"/>
    </cofactor>
</comment>
<comment type="subunit">
    <text evidence="1">Monomer.</text>
</comment>
<comment type="similarity">
    <text evidence="1">Belongs to the IPP transferase family.</text>
</comment>
<reference key="1">
    <citation type="submission" date="2007-08" db="EMBL/GenBank/DDBJ databases">
        <title>Complete sequence of Roseiflexus castenholzii DSM 13941.</title>
        <authorList>
            <consortium name="US DOE Joint Genome Institute"/>
            <person name="Copeland A."/>
            <person name="Lucas S."/>
            <person name="Lapidus A."/>
            <person name="Barry K."/>
            <person name="Glavina del Rio T."/>
            <person name="Dalin E."/>
            <person name="Tice H."/>
            <person name="Pitluck S."/>
            <person name="Thompson L.S."/>
            <person name="Brettin T."/>
            <person name="Bruce D."/>
            <person name="Detter J.C."/>
            <person name="Han C."/>
            <person name="Tapia R."/>
            <person name="Schmutz J."/>
            <person name="Larimer F."/>
            <person name="Land M."/>
            <person name="Hauser L."/>
            <person name="Kyrpides N."/>
            <person name="Mikhailova N."/>
            <person name="Bryant D.A."/>
            <person name="Hanada S."/>
            <person name="Tsukatani Y."/>
            <person name="Richardson P."/>
        </authorList>
    </citation>
    <scope>NUCLEOTIDE SEQUENCE [LARGE SCALE GENOMIC DNA]</scope>
    <source>
        <strain>DSM 13941 / HLO8</strain>
    </source>
</reference>
<proteinExistence type="inferred from homology"/>
<keyword id="KW-0067">ATP-binding</keyword>
<keyword id="KW-0460">Magnesium</keyword>
<keyword id="KW-0547">Nucleotide-binding</keyword>
<keyword id="KW-1185">Reference proteome</keyword>
<keyword id="KW-0808">Transferase</keyword>
<keyword id="KW-0819">tRNA processing</keyword>
<evidence type="ECO:0000255" key="1">
    <source>
        <dbReference type="HAMAP-Rule" id="MF_00185"/>
    </source>
</evidence>
<protein>
    <recommendedName>
        <fullName evidence="1">tRNA dimethylallyltransferase</fullName>
        <ecNumber evidence="1">2.5.1.75</ecNumber>
    </recommendedName>
    <alternativeName>
        <fullName evidence="1">Dimethylallyl diphosphate:tRNA dimethylallyltransferase</fullName>
        <shortName evidence="1">DMAPP:tRNA dimethylallyltransferase</shortName>
        <shortName evidence="1">DMATase</shortName>
    </alternativeName>
    <alternativeName>
        <fullName evidence="1">Isopentenyl-diphosphate:tRNA isopentenyltransferase</fullName>
        <shortName evidence="1">IPP transferase</shortName>
        <shortName evidence="1">IPPT</shortName>
        <shortName evidence="1">IPTase</shortName>
    </alternativeName>
</protein>